<protein>
    <recommendedName>
        <fullName evidence="1">Large ribosomal subunit protein uL24</fullName>
    </recommendedName>
    <alternativeName>
        <fullName evidence="2">50S ribosomal protein L24</fullName>
    </alternativeName>
</protein>
<comment type="function">
    <text evidence="1">One of two assembly initiator proteins, it binds directly to the 5'-end of the 23S rRNA, where it nucleates assembly of the 50S subunit.</text>
</comment>
<comment type="function">
    <text evidence="1">One of the proteins that surrounds the polypeptide exit tunnel on the outside of the subunit.</text>
</comment>
<comment type="subunit">
    <text evidence="1">Part of the 50S ribosomal subunit.</text>
</comment>
<comment type="similarity">
    <text evidence="1">Belongs to the universal ribosomal protein uL24 family.</text>
</comment>
<organism>
    <name type="scientific">Xylella fastidiosa (strain Temecula1 / ATCC 700964)</name>
    <dbReference type="NCBI Taxonomy" id="183190"/>
    <lineage>
        <taxon>Bacteria</taxon>
        <taxon>Pseudomonadati</taxon>
        <taxon>Pseudomonadota</taxon>
        <taxon>Gammaproteobacteria</taxon>
        <taxon>Lysobacterales</taxon>
        <taxon>Lysobacteraceae</taxon>
        <taxon>Xylella</taxon>
    </lineage>
</organism>
<gene>
    <name evidence="1" type="primary">rplX</name>
    <name type="ordered locus">PD_0448</name>
</gene>
<name>RL24_XYLFT</name>
<evidence type="ECO:0000255" key="1">
    <source>
        <dbReference type="HAMAP-Rule" id="MF_01326"/>
    </source>
</evidence>
<evidence type="ECO:0000305" key="2"/>
<sequence length="105" mass="11380">MASRIKKGDQVIVIAGKDKGKQGEIIRIDGHRVVVSNVNFVKRHTKPNPQRGISGGLIDREAPIHVSNIKILNPMTGKGDRVGFKILGDGCKLRIFRSTGEVIGA</sequence>
<feature type="chain" id="PRO_0000130757" description="Large ribosomal subunit protein uL24">
    <location>
        <begin position="1"/>
        <end position="105"/>
    </location>
</feature>
<proteinExistence type="inferred from homology"/>
<dbReference type="EMBL" id="AE009442">
    <property type="protein sequence ID" value="AAO28327.1"/>
    <property type="molecule type" value="Genomic_DNA"/>
</dbReference>
<dbReference type="RefSeq" id="WP_004090113.1">
    <property type="nucleotide sequence ID" value="NC_004556.1"/>
</dbReference>
<dbReference type="SMR" id="Q87E71"/>
<dbReference type="GeneID" id="93904150"/>
<dbReference type="KEGG" id="xft:PD_0448"/>
<dbReference type="HOGENOM" id="CLU_093315_2_2_6"/>
<dbReference type="Proteomes" id="UP000002516">
    <property type="component" value="Chromosome"/>
</dbReference>
<dbReference type="GO" id="GO:1990904">
    <property type="term" value="C:ribonucleoprotein complex"/>
    <property type="evidence" value="ECO:0007669"/>
    <property type="project" value="UniProtKB-KW"/>
</dbReference>
<dbReference type="GO" id="GO:0005840">
    <property type="term" value="C:ribosome"/>
    <property type="evidence" value="ECO:0007669"/>
    <property type="project" value="UniProtKB-KW"/>
</dbReference>
<dbReference type="GO" id="GO:0019843">
    <property type="term" value="F:rRNA binding"/>
    <property type="evidence" value="ECO:0007669"/>
    <property type="project" value="UniProtKB-UniRule"/>
</dbReference>
<dbReference type="GO" id="GO:0003735">
    <property type="term" value="F:structural constituent of ribosome"/>
    <property type="evidence" value="ECO:0007669"/>
    <property type="project" value="InterPro"/>
</dbReference>
<dbReference type="GO" id="GO:0006412">
    <property type="term" value="P:translation"/>
    <property type="evidence" value="ECO:0007669"/>
    <property type="project" value="UniProtKB-UniRule"/>
</dbReference>
<dbReference type="CDD" id="cd06089">
    <property type="entry name" value="KOW_RPL26"/>
    <property type="match status" value="1"/>
</dbReference>
<dbReference type="FunFam" id="2.30.30.30:FF:000004">
    <property type="entry name" value="50S ribosomal protein L24"/>
    <property type="match status" value="1"/>
</dbReference>
<dbReference type="Gene3D" id="2.30.30.30">
    <property type="match status" value="1"/>
</dbReference>
<dbReference type="HAMAP" id="MF_01326_B">
    <property type="entry name" value="Ribosomal_uL24_B"/>
    <property type="match status" value="1"/>
</dbReference>
<dbReference type="InterPro" id="IPR005824">
    <property type="entry name" value="KOW"/>
</dbReference>
<dbReference type="InterPro" id="IPR014722">
    <property type="entry name" value="Rib_uL2_dom2"/>
</dbReference>
<dbReference type="InterPro" id="IPR003256">
    <property type="entry name" value="Ribosomal_uL24"/>
</dbReference>
<dbReference type="InterPro" id="IPR005825">
    <property type="entry name" value="Ribosomal_uL24_CS"/>
</dbReference>
<dbReference type="InterPro" id="IPR041988">
    <property type="entry name" value="Ribosomal_uL24_KOW"/>
</dbReference>
<dbReference type="InterPro" id="IPR008991">
    <property type="entry name" value="Translation_prot_SH3-like_sf"/>
</dbReference>
<dbReference type="NCBIfam" id="TIGR01079">
    <property type="entry name" value="rplX_bact"/>
    <property type="match status" value="1"/>
</dbReference>
<dbReference type="PANTHER" id="PTHR12903">
    <property type="entry name" value="MITOCHONDRIAL RIBOSOMAL PROTEIN L24"/>
    <property type="match status" value="1"/>
</dbReference>
<dbReference type="Pfam" id="PF00467">
    <property type="entry name" value="KOW"/>
    <property type="match status" value="1"/>
</dbReference>
<dbReference type="Pfam" id="PF17136">
    <property type="entry name" value="ribosomal_L24"/>
    <property type="match status" value="1"/>
</dbReference>
<dbReference type="SMART" id="SM00739">
    <property type="entry name" value="KOW"/>
    <property type="match status" value="1"/>
</dbReference>
<dbReference type="SUPFAM" id="SSF50104">
    <property type="entry name" value="Translation proteins SH3-like domain"/>
    <property type="match status" value="1"/>
</dbReference>
<dbReference type="PROSITE" id="PS01108">
    <property type="entry name" value="RIBOSOMAL_L24"/>
    <property type="match status" value="1"/>
</dbReference>
<reference key="1">
    <citation type="journal article" date="2003" name="J. Bacteriol.">
        <title>Comparative analyses of the complete genome sequences of Pierce's disease and citrus variegated chlorosis strains of Xylella fastidiosa.</title>
        <authorList>
            <person name="Van Sluys M.A."/>
            <person name="de Oliveira M.C."/>
            <person name="Monteiro-Vitorello C.B."/>
            <person name="Miyaki C.Y."/>
            <person name="Furlan L.R."/>
            <person name="Camargo L.E.A."/>
            <person name="da Silva A.C.R."/>
            <person name="Moon D.H."/>
            <person name="Takita M.A."/>
            <person name="Lemos E.G.M."/>
            <person name="Machado M.A."/>
            <person name="Ferro M.I.T."/>
            <person name="da Silva F.R."/>
            <person name="Goldman M.H.S."/>
            <person name="Goldman G.H."/>
            <person name="Lemos M.V.F."/>
            <person name="El-Dorry H."/>
            <person name="Tsai S.M."/>
            <person name="Carrer H."/>
            <person name="Carraro D.M."/>
            <person name="de Oliveira R.C."/>
            <person name="Nunes L.R."/>
            <person name="Siqueira W.J."/>
            <person name="Coutinho L.L."/>
            <person name="Kimura E.T."/>
            <person name="Ferro E.S."/>
            <person name="Harakava R."/>
            <person name="Kuramae E.E."/>
            <person name="Marino C.L."/>
            <person name="Giglioti E."/>
            <person name="Abreu I.L."/>
            <person name="Alves L.M.C."/>
            <person name="do Amaral A.M."/>
            <person name="Baia G.S."/>
            <person name="Blanco S.R."/>
            <person name="Brito M.S."/>
            <person name="Cannavan F.S."/>
            <person name="Celestino A.V."/>
            <person name="da Cunha A.F."/>
            <person name="Fenille R.C."/>
            <person name="Ferro J.A."/>
            <person name="Formighieri E.F."/>
            <person name="Kishi L.T."/>
            <person name="Leoni S.G."/>
            <person name="Oliveira A.R."/>
            <person name="Rosa V.E. Jr."/>
            <person name="Sassaki F.T."/>
            <person name="Sena J.A.D."/>
            <person name="de Souza A.A."/>
            <person name="Truffi D."/>
            <person name="Tsukumo F."/>
            <person name="Yanai G.M."/>
            <person name="Zaros L.G."/>
            <person name="Civerolo E.L."/>
            <person name="Simpson A.J.G."/>
            <person name="Almeida N.F. Jr."/>
            <person name="Setubal J.C."/>
            <person name="Kitajima J.P."/>
        </authorList>
    </citation>
    <scope>NUCLEOTIDE SEQUENCE [LARGE SCALE GENOMIC DNA]</scope>
    <source>
        <strain>Temecula1 / ATCC 700964</strain>
    </source>
</reference>
<accession>Q87E71</accession>
<keyword id="KW-1185">Reference proteome</keyword>
<keyword id="KW-0687">Ribonucleoprotein</keyword>
<keyword id="KW-0689">Ribosomal protein</keyword>
<keyword id="KW-0694">RNA-binding</keyword>
<keyword id="KW-0699">rRNA-binding</keyword>